<sequence length="421" mass="45332">MRVLRLTPFFHHDCVTAWPAEFDAVGGMQVQILRLSRELADRGVEQLVMTVGFPGLPRERVDRPGLRVRVTRAPLPRLRSELTGLVGLNQAWLAAVLTACAPLRRTWRPDLVHVHADGQLWALLAGPLVSRLVGAPYCLTLHCSRLASYEPMSRFDRLQHRLVAAAERYALRRARRVSTLTSRTADTVARLLPLDRALVDVLPDSVGDVRPVARPEAEEYVRSLGVPAGRPVVGWVGRVAHEKGWRDFVAMAERWDAGSGAPGAVFAVVGDGPQRERMREAVEAAGLADRFVFTGFLPHDAVPSVMTALDVLVMPSAHEELGGSALEAMVCGTPVAGYAVGGLRDTVGSVTPSLLVPRGDVAALTRAAGDAVTDAERHRKTVAAAVPDLLGRYGADTVERALEHYRLAVGRASGGGAGWAP</sequence>
<proteinExistence type="evidence at protein level"/>
<name>NEOD_STRFR</name>
<dbReference type="EC" id="2.4.1.283"/>
<dbReference type="EMBL" id="AB211959">
    <property type="protein sequence ID" value="BAD95821.1"/>
    <property type="molecule type" value="Genomic_DNA"/>
</dbReference>
<dbReference type="EMBL" id="AJ843080">
    <property type="protein sequence ID" value="CAH58691.1"/>
    <property type="molecule type" value="Genomic_DNA"/>
</dbReference>
<dbReference type="EMBL" id="AJ629247">
    <property type="protein sequence ID" value="CAF33313.1"/>
    <property type="status" value="ALT_INIT"/>
    <property type="molecule type" value="Genomic_DNA"/>
</dbReference>
<dbReference type="EMBL" id="AJ786317">
    <property type="protein sequence ID" value="CAH05100.1"/>
    <property type="molecule type" value="Genomic_DNA"/>
</dbReference>
<dbReference type="RefSeq" id="WP_031136924.1">
    <property type="nucleotide sequence ID" value="NZ_JBIWOL010000003.1"/>
</dbReference>
<dbReference type="SMR" id="Q53U18"/>
<dbReference type="CAZy" id="GT4">
    <property type="family name" value="Glycosyltransferase Family 4"/>
</dbReference>
<dbReference type="KEGG" id="ag:BAD95821"/>
<dbReference type="BioCyc" id="MetaCyc:MONOMER-17260"/>
<dbReference type="UniPathway" id="UPA00969"/>
<dbReference type="GO" id="GO:0102319">
    <property type="term" value="F:2-deoxystreptamine N-acetyl-D-glucosaminyltransferase activity"/>
    <property type="evidence" value="ECO:0007669"/>
    <property type="project" value="UniProtKB-EC"/>
</dbReference>
<dbReference type="GO" id="GO:0016758">
    <property type="term" value="F:hexosyltransferase activity"/>
    <property type="evidence" value="ECO:0000314"/>
    <property type="project" value="UniProtKB"/>
</dbReference>
<dbReference type="GO" id="GO:1901158">
    <property type="term" value="P:neomycin biosynthetic process"/>
    <property type="evidence" value="ECO:0000314"/>
    <property type="project" value="UniProtKB"/>
</dbReference>
<dbReference type="CDD" id="cd03819">
    <property type="entry name" value="GT4_WavL-like"/>
    <property type="match status" value="1"/>
</dbReference>
<dbReference type="FunFam" id="3.40.50.2000:FF:000391">
    <property type="entry name" value="2-deoxystreptamine N-acetyl-D-glucosaminyltransferase"/>
    <property type="match status" value="1"/>
</dbReference>
<dbReference type="FunFam" id="3.40.50.2000:FF:000392">
    <property type="entry name" value="2-deoxystreptamine N-acetyl-D-glucosaminyltransferase"/>
    <property type="match status" value="1"/>
</dbReference>
<dbReference type="Gene3D" id="3.40.50.2000">
    <property type="entry name" value="Glycogen Phosphorylase B"/>
    <property type="match status" value="2"/>
</dbReference>
<dbReference type="InterPro" id="IPR001296">
    <property type="entry name" value="Glyco_trans_1"/>
</dbReference>
<dbReference type="InterPro" id="IPR028098">
    <property type="entry name" value="Glyco_trans_4-like_N"/>
</dbReference>
<dbReference type="InterPro" id="IPR050194">
    <property type="entry name" value="Glycosyltransferase_grp1"/>
</dbReference>
<dbReference type="PANTHER" id="PTHR45947">
    <property type="entry name" value="SULFOQUINOVOSYL TRANSFERASE SQD2"/>
    <property type="match status" value="1"/>
</dbReference>
<dbReference type="PANTHER" id="PTHR45947:SF3">
    <property type="entry name" value="SULFOQUINOVOSYL TRANSFERASE SQD2"/>
    <property type="match status" value="1"/>
</dbReference>
<dbReference type="Pfam" id="PF13579">
    <property type="entry name" value="Glyco_trans_4_4"/>
    <property type="match status" value="1"/>
</dbReference>
<dbReference type="Pfam" id="PF00534">
    <property type="entry name" value="Glycos_transf_1"/>
    <property type="match status" value="1"/>
</dbReference>
<dbReference type="SUPFAM" id="SSF53756">
    <property type="entry name" value="UDP-Glycosyltransferase/glycogen phosphorylase"/>
    <property type="match status" value="1"/>
</dbReference>
<protein>
    <recommendedName>
        <fullName>2-deoxystreptamine N-acetyl-D-glucosaminyltransferase</fullName>
        <ecNumber>2.4.1.283</ecNumber>
    </recommendedName>
    <alternativeName>
        <fullName>Neomycin biosynthesis protein 8</fullName>
        <shortName>Neo-8</shortName>
    </alternativeName>
    <alternativeName>
        <fullName>Neomycin biosynthesis protein D</fullName>
    </alternativeName>
</protein>
<reference key="1">
    <citation type="journal article" date="2005" name="J. Antibiot.">
        <title>Biosynthesis of 2-deoxystreptamine by three crucial enzymes in Streptomyces fradiae NBRC 12773.</title>
        <authorList>
            <person name="Kudo F."/>
            <person name="Yamamoto Y."/>
            <person name="Yokoyama K."/>
            <person name="Eguchi T."/>
            <person name="Kakinuma K."/>
        </authorList>
    </citation>
    <scope>NUCLEOTIDE SEQUENCE [GENOMIC DNA]</scope>
    <source>
        <strain>ATCC 10745 / CBS 498.68 / DSM 40063 / JCM 4133 / NBRC 12773 / NCIMB 8233 / NRRL B-1195 / VKM Ac-150</strain>
    </source>
</reference>
<reference key="2">
    <citation type="journal article" date="2005" name="Org. Biomol. Chem.">
        <title>The neomycin biosynthetic gene cluster of Streptomyces fradiae NCIMB 8233: characterisation of an aminotransferase involved in the formation of 2-deoxystreptamine.</title>
        <authorList>
            <person name="Huang F."/>
            <person name="Haydock S.F."/>
            <person name="Mironenko T."/>
            <person name="Spiteller D."/>
            <person name="Li Y."/>
            <person name="Spencer J.B."/>
        </authorList>
    </citation>
    <scope>NUCLEOTIDE SEQUENCE [GENOMIC DNA]</scope>
    <source>
        <strain>ATCC 10745 / CBS 498.68 / DSM 40063 / JCM 4133 / NBRC 12773 / NCIMB 8233 / NRRL B-1195 / VKM Ac-150</strain>
    </source>
</reference>
<reference key="3">
    <citation type="submission" date="2004-02" db="EMBL/GenBank/DDBJ databases">
        <title>Analysis and comparison of biosynthetic gene clusters for the 2-deoxy-inosamine containing aminoglycoside antibiotics ribostamycin, neomycin, lividomycin, paromomycin and butirosin.</title>
        <authorList>
            <person name="Aboshanab K.M."/>
            <person name="Schmidt-Beissner H."/>
            <person name="Wehmeier U.F."/>
            <person name="Piepersberg W."/>
            <person name="Welzel K."/>
            <person name="Vente A."/>
        </authorList>
    </citation>
    <scope>NUCLEOTIDE SEQUENCE [GENOMIC DNA]</scope>
    <source>
        <strain>ATCC 10745 / CBS 498.68 / DSM 40063 / JCM 4133 / NBRC 12773 / NCIMB 8233 / NRRL B-1195 / VKM Ac-150</strain>
    </source>
</reference>
<reference key="4">
    <citation type="submission" date="2004-07" db="EMBL/GenBank/DDBJ databases">
        <title>Cloning and characterization of a neomycin biosynthetic gene cluster from Streptomyces fradiae, ATCC 10745.</title>
        <authorList>
            <person name="Subba B."/>
            <person name="Kharel M.K."/>
            <person name="Sthapit B."/>
            <person name="Liou K."/>
            <person name="Lee H.C."/>
            <person name="Woo J.S."/>
            <person name="Sohng J.K."/>
        </authorList>
    </citation>
    <scope>NUCLEOTIDE SEQUENCE [GENOMIC DNA]</scope>
    <source>
        <strain>ATCC 10745 / CBS 498.68 / DSM 40063 / JCM 4133 / NBRC 12773 / NCIMB 8233 / NRRL B-1195 / VKM Ac-150</strain>
    </source>
</reference>
<reference key="5">
    <citation type="journal article" date="2008" name="ChemBioChem">
        <title>Involvement of two distinct N-acetylglucosaminyltransferases and a dual-function deacetylase in neomycin biosynthesis.</title>
        <authorList>
            <person name="Yokoyama K."/>
            <person name="Yamamoto Y."/>
            <person name="Kudo F."/>
            <person name="Eguchi T."/>
        </authorList>
    </citation>
    <scope>FUNCTION</scope>
    <scope>CATALYTIC ACTIVITY</scope>
    <scope>PATHWAY</scope>
</reference>
<comment type="function">
    <text evidence="1">Glycosyltransferase involved in the biosynthesis of neomycin by mediating conversion of 2-deoxystreptamine (2-DOS) to 2'-N-acetylparomamine using UDP-alpha-D-glucosamine as sugar donor.</text>
</comment>
<comment type="catalytic activity">
    <reaction evidence="1">
        <text>2-deoxystreptamine + UDP-N-acetyl-alpha-D-glucosamine = 2'-N-acetylparomamine + UDP + H(+)</text>
        <dbReference type="Rhea" id="RHEA:33947"/>
        <dbReference type="ChEBI" id="CHEBI:15378"/>
        <dbReference type="ChEBI" id="CHEBI:57705"/>
        <dbReference type="ChEBI" id="CHEBI:58223"/>
        <dbReference type="ChEBI" id="CHEBI:65010"/>
        <dbReference type="ChEBI" id="CHEBI:65069"/>
        <dbReference type="EC" id="2.4.1.283"/>
    </reaction>
</comment>
<comment type="pathway">
    <text evidence="1">Antibiotic biosynthesis; neomycin biosynthesis.</text>
</comment>
<comment type="similarity">
    <text evidence="2">Belongs to the glycosyltransferase group 1 family. Glycosyltransferase 4 subfamily.</text>
</comment>
<comment type="sequence caution" evidence="2">
    <conflict type="erroneous initiation">
        <sequence resource="EMBL-CDS" id="CAF33313"/>
    </conflict>
    <text>Truncated N-terminus.</text>
</comment>
<feature type="chain" id="PRO_0000421742" description="2-deoxystreptamine N-acetyl-D-glucosaminyltransferase">
    <location>
        <begin position="1"/>
        <end position="421"/>
    </location>
</feature>
<gene>
    <name type="primary">neoD</name>
    <name type="synonym">nemD</name>
    <name type="synonym">neo8</name>
</gene>
<organism>
    <name type="scientific">Streptomyces fradiae</name>
    <name type="common">Streptomyces roseoflavus</name>
    <dbReference type="NCBI Taxonomy" id="1906"/>
    <lineage>
        <taxon>Bacteria</taxon>
        <taxon>Bacillati</taxon>
        <taxon>Actinomycetota</taxon>
        <taxon>Actinomycetes</taxon>
        <taxon>Kitasatosporales</taxon>
        <taxon>Streptomycetaceae</taxon>
        <taxon>Streptomyces</taxon>
    </lineage>
</organism>
<evidence type="ECO:0000269" key="1">
    <source>
    </source>
</evidence>
<evidence type="ECO:0000305" key="2"/>
<keyword id="KW-0045">Antibiotic biosynthesis</keyword>
<keyword id="KW-0328">Glycosyltransferase</keyword>
<keyword id="KW-0808">Transferase</keyword>
<accession>Q53U18</accession>
<accession>Q2MFE3</accession>
<accession>Q4W2P5</accession>